<organismHost>
    <name type="scientific">Marmota monax</name>
    <name type="common">Woodchuck</name>
    <dbReference type="NCBI Taxonomy" id="9995"/>
</organismHost>
<dbReference type="EMBL" id="J02442">
    <property type="protein sequence ID" value="AAA46761.1"/>
    <property type="molecule type" value="Genomic_DNA"/>
</dbReference>
<dbReference type="PIR" id="C32397">
    <property type="entry name" value="NKVLC"/>
</dbReference>
<dbReference type="RefSeq" id="NP_671816.1">
    <property type="nucleotide sequence ID" value="NC_004107.1"/>
</dbReference>
<dbReference type="SMR" id="P69709"/>
<dbReference type="KEGG" id="vg:2546420"/>
<dbReference type="Proteomes" id="UP000007631">
    <property type="component" value="Genome"/>
</dbReference>
<dbReference type="GO" id="GO:0043657">
    <property type="term" value="C:host cell"/>
    <property type="evidence" value="ECO:0007669"/>
    <property type="project" value="GOC"/>
</dbReference>
<dbReference type="GO" id="GO:0030430">
    <property type="term" value="C:host cell cytoplasm"/>
    <property type="evidence" value="ECO:0007669"/>
    <property type="project" value="UniProtKB-SubCell"/>
</dbReference>
<dbReference type="GO" id="GO:0039619">
    <property type="term" value="C:T=4 icosahedral viral capsid"/>
    <property type="evidence" value="ECO:0007669"/>
    <property type="project" value="UniProtKB-UniRule"/>
</dbReference>
<dbReference type="GO" id="GO:0003677">
    <property type="term" value="F:DNA binding"/>
    <property type="evidence" value="ECO:0007669"/>
    <property type="project" value="UniProtKB-UniRule"/>
</dbReference>
<dbReference type="GO" id="GO:0003723">
    <property type="term" value="F:RNA binding"/>
    <property type="evidence" value="ECO:0007669"/>
    <property type="project" value="UniProtKB-UniRule"/>
</dbReference>
<dbReference type="GO" id="GO:0005198">
    <property type="term" value="F:structural molecule activity"/>
    <property type="evidence" value="ECO:0007669"/>
    <property type="project" value="UniProtKB-UniRule"/>
</dbReference>
<dbReference type="GO" id="GO:0075521">
    <property type="term" value="P:microtubule-dependent intracellular transport of viral material towards nucleus"/>
    <property type="evidence" value="ECO:0007669"/>
    <property type="project" value="UniProtKB-UniRule"/>
</dbReference>
<dbReference type="GO" id="GO:0046718">
    <property type="term" value="P:symbiont entry into host cell"/>
    <property type="evidence" value="ECO:0007669"/>
    <property type="project" value="UniProtKB-UniRule"/>
</dbReference>
<dbReference type="GO" id="GO:0075732">
    <property type="term" value="P:viral penetration into host nucleus"/>
    <property type="evidence" value="ECO:0007669"/>
    <property type="project" value="UniProtKB-UniRule"/>
</dbReference>
<dbReference type="Gene3D" id="1.10.4090.10">
    <property type="entry name" value="Viral capsid, core domain supefamily, Hepatitis B virus"/>
    <property type="match status" value="1"/>
</dbReference>
<dbReference type="HAMAP" id="MF_04076">
    <property type="entry name" value="HBV_HBEAG"/>
    <property type="match status" value="1"/>
</dbReference>
<dbReference type="InterPro" id="IPR002006">
    <property type="entry name" value="Hepatitis_core"/>
</dbReference>
<dbReference type="InterPro" id="IPR036459">
    <property type="entry name" value="Viral_capsid_core_dom_sf_HBV"/>
</dbReference>
<dbReference type="Pfam" id="PF00906">
    <property type="entry name" value="Hepatitis_core"/>
    <property type="match status" value="3"/>
</dbReference>
<dbReference type="SUPFAM" id="SSF47852">
    <property type="entry name" value="Hepatitis B viral capsid (hbcag)"/>
    <property type="match status" value="1"/>
</dbReference>
<gene>
    <name evidence="1" type="primary">C</name>
</gene>
<organism>
    <name type="scientific">Woodchuck hepatitis B virus (isolate 1)</name>
    <name type="common">WHV</name>
    <dbReference type="NCBI Taxonomy" id="10430"/>
    <lineage>
        <taxon>Viruses</taxon>
        <taxon>Riboviria</taxon>
        <taxon>Pararnavirae</taxon>
        <taxon>Artverviricota</taxon>
        <taxon>Revtraviricetes</taxon>
        <taxon>Blubervirales</taxon>
        <taxon>Hepadnaviridae</taxon>
        <taxon>Orthohepadnavirus</taxon>
        <taxon>Woodchuck hepatitis virus</taxon>
    </lineage>
</organism>
<name>CAPSD_WHV1</name>
<feature type="chain" id="PRO_0000222322" description="Capsid protein">
    <location>
        <begin position="1"/>
        <end position="188"/>
    </location>
</feature>
<feature type="repeat" description="1; half-length">
    <location>
        <begin position="160"/>
        <end position="166"/>
    </location>
</feature>
<feature type="repeat" description="2">
    <location>
        <begin position="167"/>
        <end position="174"/>
    </location>
</feature>
<feature type="repeat" description="3">
    <location>
        <begin position="175"/>
        <end position="182"/>
    </location>
</feature>
<feature type="region of interest" description="Disordered" evidence="2">
    <location>
        <begin position="150"/>
        <end position="188"/>
    </location>
</feature>
<feature type="region of interest" description="3 X 8 AA repeats of S-P-R-R-R-[PR]-S-Q">
    <location>
        <begin position="160"/>
        <end position="182"/>
    </location>
</feature>
<feature type="region of interest" description="RNA binding" evidence="1">
    <location>
        <begin position="182"/>
        <end position="188"/>
    </location>
</feature>
<feature type="short sequence motif" description="Bipartite nuclear localization signal" evidence="1">
    <location>
        <begin position="163"/>
        <end position="180"/>
    </location>
</feature>
<feature type="compositionally biased region" description="Basic residues" evidence="2">
    <location>
        <begin position="150"/>
        <end position="181"/>
    </location>
</feature>
<feature type="modified residue" description="Phosphoserine; by host" evidence="1">
    <location>
        <position position="160"/>
    </location>
</feature>
<feature type="modified residue" description="Phosphoserine; by host" evidence="1">
    <location>
        <position position="167"/>
    </location>
</feature>
<feature type="modified residue" description="Phosphoserine; by host" evidence="1">
    <location>
        <position position="175"/>
    </location>
</feature>
<comment type="function">
    <text evidence="1">Self assembles to form an icosahedral capsid. Most capsids appear to be large particles with an icosahedral symmetry of T=4 and consist of 240 copies of capsid protein, though a fraction forms smaller T=3 particles consisting of 180 capsid proteins. Entering capsids are transported along microtubules to the nucleus. Phosphorylation of the capsid is thought to induce exposure of nuclear localization signal in the C-terminal portion of the capsid protein that allows binding to the nuclear pore complex via the importin (karyopherin-) alpha and beta. Capsids are imported in intact form through the nuclear pore into the nuclear basket, where it probably binds NUP153. Only capsids that contain the mature viral genome can release the viral DNA and capsid protein into the nucleoplasm. Immature capsids get stuck in the basket. Capsids encapsulate the pre-genomic RNA and the P protein. Pre-genomic RNA is reverse-transcribed into DNA while the capsid is still in the cytoplasm. The capsid can then either be directed to the nucleus, providing more genomes for transcription, or bud through the endoplasmic reticulum to provide new virions.</text>
</comment>
<comment type="subunit">
    <text evidence="1">Homodimerizes, then multimerizes. Interacts with cytosol exposed regions of viral L glycoprotein present in the reticulum-to-Golgi compartment. Interacts with human FLNB. Phosphorylated form interacts with host importin alpha; this interaction depends on the exposure of the NLS, which itself depends upon genome maturation and/or phosphorylation of the capsid protein. Interacts with host NUP153.</text>
</comment>
<comment type="subcellular location">
    <subcellularLocation>
        <location evidence="1">Virion</location>
    </subcellularLocation>
    <subcellularLocation>
        <location evidence="1">Host cytoplasm</location>
    </subcellularLocation>
</comment>
<comment type="alternative products">
    <event type="alternative initiation"/>
    <isoform>
        <id>P69709-1</id>
        <name>Capsid protein</name>
        <sequence type="displayed"/>
    </isoform>
    <isoform>
        <id>P0C6J2-1</id>
        <name>External core antigen</name>
        <sequence type="external"/>
    </isoform>
</comment>
<comment type="PTM">
    <text evidence="1">Phosphorylated by host SRPK1, SRPK2, and maybe protein kinase C or GAPDH. Phosphorylation is critical for pregenomic RNA packaging. Protein kinase C phosphorylation is stimulated by HBx protein and may play a role in transport of the viral genome to the nucleus at the late step during the viral replication cycle.</text>
</comment>
<comment type="similarity">
    <text evidence="1">Belongs to the orthohepadnavirus core antigen family.</text>
</comment>
<reference key="1">
    <citation type="journal article" date="1982" name="J. Virol.">
        <title>Nucleotide sequence of a cloned woodchuck hepatitis virus genome: comparison with the hepatitis B virus sequence.</title>
        <authorList>
            <person name="Galibert F."/>
            <person name="Chen T.N."/>
            <person name="Mandart E."/>
        </authorList>
    </citation>
    <scope>NUCLEOTIDE SEQUENCE [GENOMIC DNA]</scope>
</reference>
<accession>P69709</accession>
<accession>P03152</accession>
<protein>
    <recommendedName>
        <fullName evidence="1">Capsid protein</fullName>
    </recommendedName>
    <alternativeName>
        <fullName evidence="1">Core antigen</fullName>
    </alternativeName>
    <alternativeName>
        <fullName evidence="1">Core protein</fullName>
    </alternativeName>
    <alternativeName>
        <fullName evidence="1">HBcAg</fullName>
    </alternativeName>
    <alternativeName>
        <fullName evidence="1">p21.5</fullName>
    </alternativeName>
</protein>
<proteinExistence type="inferred from homology"/>
<sequence>MDIDPYKEFGSSYQLLNFLPLDFFPDLNALVDTATALYEEELTGREHCSPHHTAIRQALVCWDELTKLIAWMSSNITSEQVRTIIVNHVNDTWGLKVRQSLWFHLSCLTFGQHTVQEFLVSFGVWIRTPAPYRPPNAPILSTLPEHTVIRRRGGARASRSPRRRTPSPRRRRSQSPRRRRSQSPSANC</sequence>
<evidence type="ECO:0000255" key="1">
    <source>
        <dbReference type="HAMAP-Rule" id="MF_04076"/>
    </source>
</evidence>
<evidence type="ECO:0000256" key="2">
    <source>
        <dbReference type="SAM" id="MobiDB-lite"/>
    </source>
</evidence>
<keyword id="KW-0024">Alternative initiation</keyword>
<keyword id="KW-0167">Capsid protein</keyword>
<keyword id="KW-1176">Cytoplasmic inwards viral transport</keyword>
<keyword id="KW-0238">DNA-binding</keyword>
<keyword id="KW-1035">Host cytoplasm</keyword>
<keyword id="KW-0945">Host-virus interaction</keyword>
<keyword id="KW-1177">Microtubular inwards viral transport</keyword>
<keyword id="KW-0597">Phosphoprotein</keyword>
<keyword id="KW-0677">Repeat</keyword>
<keyword id="KW-0694">RNA-binding</keyword>
<keyword id="KW-1144">T=4 icosahedral capsid protein</keyword>
<keyword id="KW-1163">Viral penetration into host nucleus</keyword>
<keyword id="KW-0946">Virion</keyword>
<keyword id="KW-1160">Virus entry into host cell</keyword>